<accession>Q2U8K6</accession>
<keyword id="KW-0067">ATP-binding</keyword>
<keyword id="KW-0963">Cytoplasm</keyword>
<keyword id="KW-0347">Helicase</keyword>
<keyword id="KW-0378">Hydrolase</keyword>
<keyword id="KW-0472">Membrane</keyword>
<keyword id="KW-0509">mRNA transport</keyword>
<keyword id="KW-0906">Nuclear pore complex</keyword>
<keyword id="KW-0547">Nucleotide-binding</keyword>
<keyword id="KW-0539">Nucleus</keyword>
<keyword id="KW-0653">Protein transport</keyword>
<keyword id="KW-1185">Reference proteome</keyword>
<keyword id="KW-0694">RNA-binding</keyword>
<keyword id="KW-0811">Translocation</keyword>
<keyword id="KW-0813">Transport</keyword>
<feature type="chain" id="PRO_0000232218" description="ATP-dependent RNA helicase dbp5">
    <location>
        <begin position="1"/>
        <end position="487"/>
    </location>
</feature>
<feature type="domain" description="Helicase ATP-binding" evidence="2">
    <location>
        <begin position="111"/>
        <end position="284"/>
    </location>
</feature>
<feature type="domain" description="Helicase C-terminal" evidence="3">
    <location>
        <begin position="295"/>
        <end position="468"/>
    </location>
</feature>
<feature type="region of interest" description="Disordered" evidence="4">
    <location>
        <begin position="1"/>
        <end position="53"/>
    </location>
</feature>
<feature type="short sequence motif" description="Q motif">
    <location>
        <begin position="78"/>
        <end position="106"/>
    </location>
</feature>
<feature type="short sequence motif" description="DEAD box">
    <location>
        <begin position="231"/>
        <end position="234"/>
    </location>
</feature>
<feature type="binding site" evidence="2">
    <location>
        <begin position="124"/>
        <end position="131"/>
    </location>
    <ligand>
        <name>ATP</name>
        <dbReference type="ChEBI" id="CHEBI:30616"/>
    </ligand>
</feature>
<proteinExistence type="inferred from homology"/>
<protein>
    <recommendedName>
        <fullName>ATP-dependent RNA helicase dbp5</fullName>
        <ecNumber>3.6.4.13</ecNumber>
    </recommendedName>
</protein>
<dbReference type="EC" id="3.6.4.13"/>
<dbReference type="EMBL" id="BA000053">
    <property type="protein sequence ID" value="BAE62109.1"/>
    <property type="molecule type" value="Genomic_DNA"/>
</dbReference>
<dbReference type="RefSeq" id="XP_001823242.1">
    <property type="nucleotide sequence ID" value="XM_001823190.2"/>
</dbReference>
<dbReference type="SMR" id="Q2U8K6"/>
<dbReference type="STRING" id="510516.Q2U8K6"/>
<dbReference type="EnsemblFungi" id="BAE62109">
    <property type="protein sequence ID" value="BAE62109"/>
    <property type="gene ID" value="AO090701000397"/>
</dbReference>
<dbReference type="GeneID" id="5995299"/>
<dbReference type="KEGG" id="aor:AO090701000397"/>
<dbReference type="VEuPathDB" id="FungiDB:AO090701000397"/>
<dbReference type="HOGENOM" id="CLU_003041_1_0_1"/>
<dbReference type="OMA" id="IAAETRW"/>
<dbReference type="OrthoDB" id="51972at5052"/>
<dbReference type="Proteomes" id="UP000006564">
    <property type="component" value="Chromosome 5"/>
</dbReference>
<dbReference type="GO" id="GO:0005934">
    <property type="term" value="C:cellular bud tip"/>
    <property type="evidence" value="ECO:0007669"/>
    <property type="project" value="EnsemblFungi"/>
</dbReference>
<dbReference type="GO" id="GO:0010494">
    <property type="term" value="C:cytoplasmic stress granule"/>
    <property type="evidence" value="ECO:0007669"/>
    <property type="project" value="EnsemblFungi"/>
</dbReference>
<dbReference type="GO" id="GO:0031965">
    <property type="term" value="C:nuclear membrane"/>
    <property type="evidence" value="ECO:0007669"/>
    <property type="project" value="UniProtKB-SubCell"/>
</dbReference>
<dbReference type="GO" id="GO:0044614">
    <property type="term" value="C:nuclear pore cytoplasmic filaments"/>
    <property type="evidence" value="ECO:0007669"/>
    <property type="project" value="EnsemblFungi"/>
</dbReference>
<dbReference type="GO" id="GO:0005524">
    <property type="term" value="F:ATP binding"/>
    <property type="evidence" value="ECO:0007669"/>
    <property type="project" value="UniProtKB-KW"/>
</dbReference>
<dbReference type="GO" id="GO:0016887">
    <property type="term" value="F:ATP hydrolysis activity"/>
    <property type="evidence" value="ECO:0007669"/>
    <property type="project" value="RHEA"/>
</dbReference>
<dbReference type="GO" id="GO:0000822">
    <property type="term" value="F:inositol hexakisphosphate binding"/>
    <property type="evidence" value="ECO:0007669"/>
    <property type="project" value="EnsemblFungi"/>
</dbReference>
<dbReference type="GO" id="GO:0003723">
    <property type="term" value="F:RNA binding"/>
    <property type="evidence" value="ECO:0007669"/>
    <property type="project" value="UniProtKB-KW"/>
</dbReference>
<dbReference type="GO" id="GO:0003724">
    <property type="term" value="F:RNA helicase activity"/>
    <property type="evidence" value="ECO:0007669"/>
    <property type="project" value="UniProtKB-EC"/>
</dbReference>
<dbReference type="GO" id="GO:0016973">
    <property type="term" value="P:poly(A)+ mRNA export from nucleus"/>
    <property type="evidence" value="ECO:0007669"/>
    <property type="project" value="EnsemblFungi"/>
</dbReference>
<dbReference type="GO" id="GO:0015031">
    <property type="term" value="P:protein transport"/>
    <property type="evidence" value="ECO:0007669"/>
    <property type="project" value="UniProtKB-KW"/>
</dbReference>
<dbReference type="GO" id="GO:0006415">
    <property type="term" value="P:translational termination"/>
    <property type="evidence" value="ECO:0007669"/>
    <property type="project" value="EnsemblFungi"/>
</dbReference>
<dbReference type="GO" id="GO:0006409">
    <property type="term" value="P:tRNA export from nucleus"/>
    <property type="evidence" value="ECO:0007669"/>
    <property type="project" value="EnsemblFungi"/>
</dbReference>
<dbReference type="CDD" id="cd17963">
    <property type="entry name" value="DEADc_DDX19_DDX25"/>
    <property type="match status" value="1"/>
</dbReference>
<dbReference type="CDD" id="cd18787">
    <property type="entry name" value="SF2_C_DEAD"/>
    <property type="match status" value="1"/>
</dbReference>
<dbReference type="FunFam" id="3.40.50.300:FF:000849">
    <property type="entry name" value="ATP-dependent RNA helicase DBP5"/>
    <property type="match status" value="1"/>
</dbReference>
<dbReference type="Gene3D" id="3.40.50.300">
    <property type="entry name" value="P-loop containing nucleotide triphosphate hydrolases"/>
    <property type="match status" value="2"/>
</dbReference>
<dbReference type="InterPro" id="IPR011545">
    <property type="entry name" value="DEAD/DEAH_box_helicase_dom"/>
</dbReference>
<dbReference type="InterPro" id="IPR014001">
    <property type="entry name" value="Helicase_ATP-bd"/>
</dbReference>
<dbReference type="InterPro" id="IPR001650">
    <property type="entry name" value="Helicase_C-like"/>
</dbReference>
<dbReference type="InterPro" id="IPR027417">
    <property type="entry name" value="P-loop_NTPase"/>
</dbReference>
<dbReference type="InterPro" id="IPR000629">
    <property type="entry name" value="RNA-helicase_DEAD-box_CS"/>
</dbReference>
<dbReference type="InterPro" id="IPR014014">
    <property type="entry name" value="RNA_helicase_DEAD_Q_motif"/>
</dbReference>
<dbReference type="PANTHER" id="PTHR47958">
    <property type="entry name" value="ATP-DEPENDENT RNA HELICASE DBP3"/>
    <property type="match status" value="1"/>
</dbReference>
<dbReference type="Pfam" id="PF00270">
    <property type="entry name" value="DEAD"/>
    <property type="match status" value="1"/>
</dbReference>
<dbReference type="Pfam" id="PF00271">
    <property type="entry name" value="Helicase_C"/>
    <property type="match status" value="1"/>
</dbReference>
<dbReference type="SMART" id="SM00487">
    <property type="entry name" value="DEXDc"/>
    <property type="match status" value="1"/>
</dbReference>
<dbReference type="SMART" id="SM00490">
    <property type="entry name" value="HELICc"/>
    <property type="match status" value="1"/>
</dbReference>
<dbReference type="SUPFAM" id="SSF52540">
    <property type="entry name" value="P-loop containing nucleoside triphosphate hydrolases"/>
    <property type="match status" value="1"/>
</dbReference>
<dbReference type="PROSITE" id="PS00039">
    <property type="entry name" value="DEAD_ATP_HELICASE"/>
    <property type="match status" value="1"/>
</dbReference>
<dbReference type="PROSITE" id="PS51192">
    <property type="entry name" value="HELICASE_ATP_BIND_1"/>
    <property type="match status" value="1"/>
</dbReference>
<dbReference type="PROSITE" id="PS51194">
    <property type="entry name" value="HELICASE_CTER"/>
    <property type="match status" value="1"/>
</dbReference>
<dbReference type="PROSITE" id="PS51195">
    <property type="entry name" value="Q_MOTIF"/>
    <property type="match status" value="1"/>
</dbReference>
<name>DBP5_ASPOR</name>
<gene>
    <name type="primary">dbp5</name>
    <name type="ORF">AO090701000397</name>
</gene>
<organism>
    <name type="scientific">Aspergillus oryzae (strain ATCC 42149 / RIB 40)</name>
    <name type="common">Yellow koji mold</name>
    <dbReference type="NCBI Taxonomy" id="510516"/>
    <lineage>
        <taxon>Eukaryota</taxon>
        <taxon>Fungi</taxon>
        <taxon>Dikarya</taxon>
        <taxon>Ascomycota</taxon>
        <taxon>Pezizomycotina</taxon>
        <taxon>Eurotiomycetes</taxon>
        <taxon>Eurotiomycetidae</taxon>
        <taxon>Eurotiales</taxon>
        <taxon>Aspergillaceae</taxon>
        <taxon>Aspergillus</taxon>
        <taxon>Aspergillus subgen. Circumdati</taxon>
    </lineage>
</organism>
<reference key="1">
    <citation type="journal article" date="2005" name="Nature">
        <title>Genome sequencing and analysis of Aspergillus oryzae.</title>
        <authorList>
            <person name="Machida M."/>
            <person name="Asai K."/>
            <person name="Sano M."/>
            <person name="Tanaka T."/>
            <person name="Kumagai T."/>
            <person name="Terai G."/>
            <person name="Kusumoto K."/>
            <person name="Arima T."/>
            <person name="Akita O."/>
            <person name="Kashiwagi Y."/>
            <person name="Abe K."/>
            <person name="Gomi K."/>
            <person name="Horiuchi H."/>
            <person name="Kitamoto K."/>
            <person name="Kobayashi T."/>
            <person name="Takeuchi M."/>
            <person name="Denning D.W."/>
            <person name="Galagan J.E."/>
            <person name="Nierman W.C."/>
            <person name="Yu J."/>
            <person name="Archer D.B."/>
            <person name="Bennett J.W."/>
            <person name="Bhatnagar D."/>
            <person name="Cleveland T.E."/>
            <person name="Fedorova N.D."/>
            <person name="Gotoh O."/>
            <person name="Horikawa H."/>
            <person name="Hosoyama A."/>
            <person name="Ichinomiya M."/>
            <person name="Igarashi R."/>
            <person name="Iwashita K."/>
            <person name="Juvvadi P.R."/>
            <person name="Kato M."/>
            <person name="Kato Y."/>
            <person name="Kin T."/>
            <person name="Kokubun A."/>
            <person name="Maeda H."/>
            <person name="Maeyama N."/>
            <person name="Maruyama J."/>
            <person name="Nagasaki H."/>
            <person name="Nakajima T."/>
            <person name="Oda K."/>
            <person name="Okada K."/>
            <person name="Paulsen I."/>
            <person name="Sakamoto K."/>
            <person name="Sawano T."/>
            <person name="Takahashi M."/>
            <person name="Takase K."/>
            <person name="Terabayashi Y."/>
            <person name="Wortman J.R."/>
            <person name="Yamada O."/>
            <person name="Yamagata Y."/>
            <person name="Anazawa H."/>
            <person name="Hata Y."/>
            <person name="Koide Y."/>
            <person name="Komori T."/>
            <person name="Koyama Y."/>
            <person name="Minetoki T."/>
            <person name="Suharnan S."/>
            <person name="Tanaka A."/>
            <person name="Isono K."/>
            <person name="Kuhara S."/>
            <person name="Ogasawara N."/>
            <person name="Kikuchi H."/>
        </authorList>
    </citation>
    <scope>NUCLEOTIDE SEQUENCE [LARGE SCALE GENOMIC DNA]</scope>
    <source>
        <strain>ATCC 42149 / RIB 40</strain>
    </source>
</reference>
<sequence length="487" mass="53334">MSAEQPAETASAGNPLADRITTADGSKPEGTTETTDNEQADGAAAQLGGSELNEPDYTVEVKLSDLQADPNNPLYSVKSFEDLGLDPRILQGLSAMNFRKPSKIQERALPLLLNNPPKNLVGQSQSGTGKTAAFVLNALSRLDLSTEQAQKTPQALILAPTRELARQIVGVIQCMGQFLDGLNVSTAVPADTNSRHSKIESSVVVGTPGTVMDMIRKRVMVANKLKVLVLDEADNMLDQQGLGDQCIRVKALLPKDIQVVLFSATFPTHVHQYASKFAPQANELTLQHEELTVEGIKQLYLDCSDEEDKYKTLVQLYGLLTVASSIIFVKTRASAAEIEKRMVAEGHTVASLTGGIEGSQRDAVIDQFRAGQAKVLITTNVLARGIDVSTVSMVINYDIPELHQPGAPERQADFQTYLHRIGRTGRFGRVGVSISFVSNREEWNMLNQIQQYFNCTIQRVDTKDWDEVEDIIKKTIKNTRAQAQFGR</sequence>
<comment type="function">
    <text evidence="1">ATP-dependent RNA helicase associated with the nuclear pore complex and essential for mRNA export from the nucleus. May participate in a terminal step of mRNA export through the removal of proteins that accompany mRNA through the nucleopore complex. May also be involved in early transcription (By similarity).</text>
</comment>
<comment type="catalytic activity">
    <reaction>
        <text>ATP + H2O = ADP + phosphate + H(+)</text>
        <dbReference type="Rhea" id="RHEA:13065"/>
        <dbReference type="ChEBI" id="CHEBI:15377"/>
        <dbReference type="ChEBI" id="CHEBI:15378"/>
        <dbReference type="ChEBI" id="CHEBI:30616"/>
        <dbReference type="ChEBI" id="CHEBI:43474"/>
        <dbReference type="ChEBI" id="CHEBI:456216"/>
        <dbReference type="EC" id="3.6.4.13"/>
    </reaction>
</comment>
<comment type="subunit">
    <text evidence="1">Associates with the nuclear pore complex.</text>
</comment>
<comment type="subcellular location">
    <subcellularLocation>
        <location evidence="1">Cytoplasm</location>
    </subcellularLocation>
    <subcellularLocation>
        <location>Nucleus</location>
        <location>Nuclear pore complex</location>
    </subcellularLocation>
    <subcellularLocation>
        <location evidence="1">Nucleus membrane</location>
        <topology evidence="1">Peripheral membrane protein</topology>
        <orientation evidence="1">Cytoplasmic side</orientation>
    </subcellularLocation>
    <text evidence="1">Nuclear pore complex cytoplasmic fibrils.</text>
</comment>
<comment type="domain">
    <text>The Q motif is unique to and characteristic of the DEAD box family of RNA helicases and controls ATP binding and hydrolysis.</text>
</comment>
<comment type="similarity">
    <text evidence="5">Belongs to the DEAD box helicase family. DDX19/DBP5 subfamily.</text>
</comment>
<evidence type="ECO:0000250" key="1"/>
<evidence type="ECO:0000255" key="2">
    <source>
        <dbReference type="PROSITE-ProRule" id="PRU00541"/>
    </source>
</evidence>
<evidence type="ECO:0000255" key="3">
    <source>
        <dbReference type="PROSITE-ProRule" id="PRU00542"/>
    </source>
</evidence>
<evidence type="ECO:0000256" key="4">
    <source>
        <dbReference type="SAM" id="MobiDB-lite"/>
    </source>
</evidence>
<evidence type="ECO:0000305" key="5"/>